<reference key="1">
    <citation type="submission" date="2007-05" db="EMBL/GenBank/DDBJ databases">
        <title>Complete sequence of Pseudomonas putida F1.</title>
        <authorList>
            <consortium name="US DOE Joint Genome Institute"/>
            <person name="Copeland A."/>
            <person name="Lucas S."/>
            <person name="Lapidus A."/>
            <person name="Barry K."/>
            <person name="Detter J.C."/>
            <person name="Glavina del Rio T."/>
            <person name="Hammon N."/>
            <person name="Israni S."/>
            <person name="Dalin E."/>
            <person name="Tice H."/>
            <person name="Pitluck S."/>
            <person name="Chain P."/>
            <person name="Malfatti S."/>
            <person name="Shin M."/>
            <person name="Vergez L."/>
            <person name="Schmutz J."/>
            <person name="Larimer F."/>
            <person name="Land M."/>
            <person name="Hauser L."/>
            <person name="Kyrpides N."/>
            <person name="Lykidis A."/>
            <person name="Parales R."/>
            <person name="Richardson P."/>
        </authorList>
    </citation>
    <scope>NUCLEOTIDE SEQUENCE [LARGE SCALE GENOMIC DNA]</scope>
    <source>
        <strain>ATCC 700007 / DSM 6899 / JCM 31910 / BCRC 17059 / LMG 24140 / F1</strain>
    </source>
</reference>
<name>RLMM_PSEP1</name>
<protein>
    <recommendedName>
        <fullName evidence="1">Ribosomal RNA large subunit methyltransferase M</fullName>
        <ecNumber evidence="1">2.1.1.186</ecNumber>
    </recommendedName>
    <alternativeName>
        <fullName evidence="1">23S rRNA (cytidine2498-2'-O)-methyltransferase</fullName>
    </alternativeName>
    <alternativeName>
        <fullName evidence="1">23S rRNA 2'-O-ribose methyltransferase RlmM</fullName>
    </alternativeName>
</protein>
<dbReference type="EC" id="2.1.1.186" evidence="1"/>
<dbReference type="EMBL" id="CP000712">
    <property type="protein sequence ID" value="ABQ79750.1"/>
    <property type="molecule type" value="Genomic_DNA"/>
</dbReference>
<dbReference type="SMR" id="A5W6J0"/>
<dbReference type="KEGG" id="ppf:Pput_3626"/>
<dbReference type="eggNOG" id="COG2933">
    <property type="taxonomic scope" value="Bacteria"/>
</dbReference>
<dbReference type="HOGENOM" id="CLU_043780_0_0_6"/>
<dbReference type="GO" id="GO:0005737">
    <property type="term" value="C:cytoplasm"/>
    <property type="evidence" value="ECO:0007669"/>
    <property type="project" value="UniProtKB-SubCell"/>
</dbReference>
<dbReference type="GO" id="GO:0008757">
    <property type="term" value="F:S-adenosylmethionine-dependent methyltransferase activity"/>
    <property type="evidence" value="ECO:0007669"/>
    <property type="project" value="UniProtKB-UniRule"/>
</dbReference>
<dbReference type="GO" id="GO:0032259">
    <property type="term" value="P:methylation"/>
    <property type="evidence" value="ECO:0007669"/>
    <property type="project" value="UniProtKB-KW"/>
</dbReference>
<dbReference type="GO" id="GO:0006364">
    <property type="term" value="P:rRNA processing"/>
    <property type="evidence" value="ECO:0007669"/>
    <property type="project" value="UniProtKB-UniRule"/>
</dbReference>
<dbReference type="Gene3D" id="3.30.2300.20">
    <property type="match status" value="1"/>
</dbReference>
<dbReference type="Gene3D" id="3.30.70.2810">
    <property type="match status" value="1"/>
</dbReference>
<dbReference type="Gene3D" id="3.40.50.150">
    <property type="entry name" value="Vaccinia Virus protein VP39"/>
    <property type="match status" value="1"/>
</dbReference>
<dbReference type="HAMAP" id="MF_01551">
    <property type="entry name" value="23SrRNA_methyltr_M"/>
    <property type="match status" value="1"/>
</dbReference>
<dbReference type="InterPro" id="IPR040739">
    <property type="entry name" value="RlmM_FDX"/>
</dbReference>
<dbReference type="InterPro" id="IPR048646">
    <property type="entry name" value="RlmM_THUMP-like"/>
</dbReference>
<dbReference type="InterPro" id="IPR002877">
    <property type="entry name" value="RNA_MeTrfase_FtsJ_dom"/>
</dbReference>
<dbReference type="InterPro" id="IPR011224">
    <property type="entry name" value="rRNA_MeTrfase_M"/>
</dbReference>
<dbReference type="InterPro" id="IPR029063">
    <property type="entry name" value="SAM-dependent_MTases_sf"/>
</dbReference>
<dbReference type="NCBIfam" id="NF008734">
    <property type="entry name" value="PRK11760.1"/>
    <property type="match status" value="1"/>
</dbReference>
<dbReference type="PANTHER" id="PTHR37524">
    <property type="entry name" value="RIBOSOMAL RNA LARGE SUBUNIT METHYLTRANSFERASE M"/>
    <property type="match status" value="1"/>
</dbReference>
<dbReference type="PANTHER" id="PTHR37524:SF2">
    <property type="entry name" value="RIBOSOMAL RNA METHYLTRANSFERASE FTSJ DOMAIN-CONTAINING PROTEIN"/>
    <property type="match status" value="1"/>
</dbReference>
<dbReference type="Pfam" id="PF01728">
    <property type="entry name" value="FtsJ"/>
    <property type="match status" value="1"/>
</dbReference>
<dbReference type="Pfam" id="PF18125">
    <property type="entry name" value="RlmM_FDX"/>
    <property type="match status" value="1"/>
</dbReference>
<dbReference type="Pfam" id="PF21239">
    <property type="entry name" value="RLMM_N"/>
    <property type="match status" value="1"/>
</dbReference>
<dbReference type="PIRSF" id="PIRSF028774">
    <property type="entry name" value="UCP028774"/>
    <property type="match status" value="1"/>
</dbReference>
<dbReference type="SUPFAM" id="SSF53335">
    <property type="entry name" value="S-adenosyl-L-methionine-dependent methyltransferases"/>
    <property type="match status" value="1"/>
</dbReference>
<evidence type="ECO:0000255" key="1">
    <source>
        <dbReference type="HAMAP-Rule" id="MF_01551"/>
    </source>
</evidence>
<feature type="chain" id="PRO_0000314529" description="Ribosomal RNA large subunit methyltransferase M">
    <location>
        <begin position="1"/>
        <end position="354"/>
    </location>
</feature>
<feature type="active site" description="Proton acceptor" evidence="1">
    <location>
        <position position="300"/>
    </location>
</feature>
<feature type="binding site" evidence="1">
    <location>
        <position position="183"/>
    </location>
    <ligand>
        <name>S-adenosyl-L-methionine</name>
        <dbReference type="ChEBI" id="CHEBI:59789"/>
    </ligand>
</feature>
<feature type="binding site" evidence="1">
    <location>
        <begin position="216"/>
        <end position="219"/>
    </location>
    <ligand>
        <name>S-adenosyl-L-methionine</name>
        <dbReference type="ChEBI" id="CHEBI:59789"/>
    </ligand>
</feature>
<feature type="binding site" evidence="1">
    <location>
        <position position="235"/>
    </location>
    <ligand>
        <name>S-adenosyl-L-methionine</name>
        <dbReference type="ChEBI" id="CHEBI:59789"/>
    </ligand>
</feature>
<feature type="binding site" evidence="1">
    <location>
        <position position="255"/>
    </location>
    <ligand>
        <name>S-adenosyl-L-methionine</name>
        <dbReference type="ChEBI" id="CHEBI:59789"/>
    </ligand>
</feature>
<feature type="binding site" evidence="1">
    <location>
        <position position="271"/>
    </location>
    <ligand>
        <name>S-adenosyl-L-methionine</name>
        <dbReference type="ChEBI" id="CHEBI:59789"/>
    </ligand>
</feature>
<sequence>MNTLFMHCRPGFEGEVCAEISEHAARLGVAGYAKGKPQSASAEFVCSEEGGAERLMGELRFNQLIFPRQWARGGYVELPESDRISVLLAQLVDFPVFGSLWLEVLDSNEGKELSTFCRKFEVPLRKALEKAGRLVDDPGRPRLLLTFISGRRVFVGVASASNSALWPMGIPRLKFPREAPSRSTLKLEEAWHQFIPREQWEQRLGDDMTGVDLGASPGGWTYQLVRRGMLVTAIDNGPMAESLMDTGLVQHLMADGFTWQPKHPVDWMVCDIVEKPARTTSLIETWLGEGLCREAVVNLKLPMKQRYAEVRRLLDRMEATFKARKIRVSIACKQLYHDREEVTCHLRRLDLKPR</sequence>
<accession>A5W6J0</accession>
<keyword id="KW-0963">Cytoplasm</keyword>
<keyword id="KW-0489">Methyltransferase</keyword>
<keyword id="KW-0698">rRNA processing</keyword>
<keyword id="KW-0949">S-adenosyl-L-methionine</keyword>
<keyword id="KW-0808">Transferase</keyword>
<gene>
    <name evidence="1" type="primary">rlmM</name>
    <name type="ordered locus">Pput_3626</name>
</gene>
<organism>
    <name type="scientific">Pseudomonas putida (strain ATCC 700007 / DSM 6899 / JCM 31910 / BCRC 17059 / LMG 24140 / F1)</name>
    <dbReference type="NCBI Taxonomy" id="351746"/>
    <lineage>
        <taxon>Bacteria</taxon>
        <taxon>Pseudomonadati</taxon>
        <taxon>Pseudomonadota</taxon>
        <taxon>Gammaproteobacteria</taxon>
        <taxon>Pseudomonadales</taxon>
        <taxon>Pseudomonadaceae</taxon>
        <taxon>Pseudomonas</taxon>
    </lineage>
</organism>
<comment type="function">
    <text evidence="1">Catalyzes the 2'-O-methylation at nucleotide C2498 in 23S rRNA.</text>
</comment>
<comment type="catalytic activity">
    <reaction evidence="1">
        <text>cytidine(2498) in 23S rRNA + S-adenosyl-L-methionine = 2'-O-methylcytidine(2498) in 23S rRNA + S-adenosyl-L-homocysteine + H(+)</text>
        <dbReference type="Rhea" id="RHEA:42788"/>
        <dbReference type="Rhea" id="RHEA-COMP:10244"/>
        <dbReference type="Rhea" id="RHEA-COMP:10245"/>
        <dbReference type="ChEBI" id="CHEBI:15378"/>
        <dbReference type="ChEBI" id="CHEBI:57856"/>
        <dbReference type="ChEBI" id="CHEBI:59789"/>
        <dbReference type="ChEBI" id="CHEBI:74495"/>
        <dbReference type="ChEBI" id="CHEBI:82748"/>
        <dbReference type="EC" id="2.1.1.186"/>
    </reaction>
</comment>
<comment type="subunit">
    <text evidence="1">Monomer.</text>
</comment>
<comment type="subcellular location">
    <subcellularLocation>
        <location evidence="1">Cytoplasm</location>
    </subcellularLocation>
</comment>
<comment type="similarity">
    <text evidence="1">Belongs to the class I-like SAM-binding methyltransferase superfamily. RNA methyltransferase RlmE family. RlmM subfamily.</text>
</comment>
<proteinExistence type="inferred from homology"/>